<evidence type="ECO:0000255" key="1">
    <source>
        <dbReference type="HAMAP-Rule" id="MF_01369"/>
    </source>
</evidence>
<evidence type="ECO:0000305" key="2"/>
<name>RL23_ANOFW</name>
<dbReference type="EMBL" id="CP000922">
    <property type="protein sequence ID" value="ACJ32491.1"/>
    <property type="molecule type" value="Genomic_DNA"/>
</dbReference>
<dbReference type="RefSeq" id="WP_003397660.1">
    <property type="nucleotide sequence ID" value="NC_011567.1"/>
</dbReference>
<dbReference type="SMR" id="B7GJ69"/>
<dbReference type="STRING" id="491915.Aflv_0107"/>
<dbReference type="GeneID" id="7036306"/>
<dbReference type="KEGG" id="afl:Aflv_0107"/>
<dbReference type="eggNOG" id="COG0089">
    <property type="taxonomic scope" value="Bacteria"/>
</dbReference>
<dbReference type="HOGENOM" id="CLU_037562_3_2_9"/>
<dbReference type="Proteomes" id="UP000000742">
    <property type="component" value="Chromosome"/>
</dbReference>
<dbReference type="GO" id="GO:1990904">
    <property type="term" value="C:ribonucleoprotein complex"/>
    <property type="evidence" value="ECO:0007669"/>
    <property type="project" value="UniProtKB-KW"/>
</dbReference>
<dbReference type="GO" id="GO:0005840">
    <property type="term" value="C:ribosome"/>
    <property type="evidence" value="ECO:0007669"/>
    <property type="project" value="UniProtKB-KW"/>
</dbReference>
<dbReference type="GO" id="GO:0019843">
    <property type="term" value="F:rRNA binding"/>
    <property type="evidence" value="ECO:0007669"/>
    <property type="project" value="UniProtKB-UniRule"/>
</dbReference>
<dbReference type="GO" id="GO:0003735">
    <property type="term" value="F:structural constituent of ribosome"/>
    <property type="evidence" value="ECO:0007669"/>
    <property type="project" value="InterPro"/>
</dbReference>
<dbReference type="GO" id="GO:0006412">
    <property type="term" value="P:translation"/>
    <property type="evidence" value="ECO:0007669"/>
    <property type="project" value="UniProtKB-UniRule"/>
</dbReference>
<dbReference type="FunFam" id="3.30.70.330:FF:000001">
    <property type="entry name" value="50S ribosomal protein L23"/>
    <property type="match status" value="1"/>
</dbReference>
<dbReference type="Gene3D" id="3.30.70.330">
    <property type="match status" value="1"/>
</dbReference>
<dbReference type="HAMAP" id="MF_01369_B">
    <property type="entry name" value="Ribosomal_uL23_B"/>
    <property type="match status" value="1"/>
</dbReference>
<dbReference type="InterPro" id="IPR012677">
    <property type="entry name" value="Nucleotide-bd_a/b_plait_sf"/>
</dbReference>
<dbReference type="InterPro" id="IPR013025">
    <property type="entry name" value="Ribosomal_uL23-like"/>
</dbReference>
<dbReference type="InterPro" id="IPR012678">
    <property type="entry name" value="Ribosomal_uL23/eL15/eS24_sf"/>
</dbReference>
<dbReference type="InterPro" id="IPR001014">
    <property type="entry name" value="Ribosomal_uL23_CS"/>
</dbReference>
<dbReference type="NCBIfam" id="NF004363">
    <property type="entry name" value="PRK05738.2-4"/>
    <property type="match status" value="1"/>
</dbReference>
<dbReference type="PANTHER" id="PTHR11620">
    <property type="entry name" value="60S RIBOSOMAL PROTEIN L23A"/>
    <property type="match status" value="1"/>
</dbReference>
<dbReference type="Pfam" id="PF00276">
    <property type="entry name" value="Ribosomal_L23"/>
    <property type="match status" value="1"/>
</dbReference>
<dbReference type="SUPFAM" id="SSF54189">
    <property type="entry name" value="Ribosomal proteins S24e, L23 and L15e"/>
    <property type="match status" value="1"/>
</dbReference>
<dbReference type="PROSITE" id="PS00050">
    <property type="entry name" value="RIBOSOMAL_L23"/>
    <property type="match status" value="1"/>
</dbReference>
<protein>
    <recommendedName>
        <fullName evidence="1">Large ribosomal subunit protein uL23</fullName>
    </recommendedName>
    <alternativeName>
        <fullName evidence="2">50S ribosomal protein L23</fullName>
    </alternativeName>
</protein>
<organism>
    <name type="scientific">Anoxybacillus flavithermus (strain DSM 21510 / WK1)</name>
    <dbReference type="NCBI Taxonomy" id="491915"/>
    <lineage>
        <taxon>Bacteria</taxon>
        <taxon>Bacillati</taxon>
        <taxon>Bacillota</taxon>
        <taxon>Bacilli</taxon>
        <taxon>Bacillales</taxon>
        <taxon>Anoxybacillaceae</taxon>
        <taxon>Anoxybacillus</taxon>
    </lineage>
</organism>
<accession>B7GJ69</accession>
<proteinExistence type="inferred from homology"/>
<feature type="chain" id="PRO_1000144527" description="Large ribosomal subunit protein uL23">
    <location>
        <begin position="1"/>
        <end position="95"/>
    </location>
</feature>
<keyword id="KW-0687">Ribonucleoprotein</keyword>
<keyword id="KW-0689">Ribosomal protein</keyword>
<keyword id="KW-0694">RNA-binding</keyword>
<keyword id="KW-0699">rRNA-binding</keyword>
<comment type="function">
    <text evidence="1">One of the early assembly proteins it binds 23S rRNA. One of the proteins that surrounds the polypeptide exit tunnel on the outside of the ribosome. Forms the main docking site for trigger factor binding to the ribosome.</text>
</comment>
<comment type="subunit">
    <text evidence="1">Part of the 50S ribosomal subunit. Contacts protein L29, and trigger factor when it is bound to the ribosome.</text>
</comment>
<comment type="similarity">
    <text evidence="1">Belongs to the universal ribosomal protein uL23 family.</text>
</comment>
<gene>
    <name evidence="1" type="primary">rplW</name>
    <name type="ordered locus">Aflv_0107</name>
</gene>
<reference key="1">
    <citation type="journal article" date="2008" name="Genome Biol.">
        <title>Encapsulated in silica: genome, proteome and physiology of the thermophilic bacterium Anoxybacillus flavithermus WK1.</title>
        <authorList>
            <person name="Saw J.H."/>
            <person name="Mountain B.W."/>
            <person name="Feng L."/>
            <person name="Omelchenko M.V."/>
            <person name="Hou S."/>
            <person name="Saito J.A."/>
            <person name="Stott M.B."/>
            <person name="Li D."/>
            <person name="Zhao G."/>
            <person name="Wu J."/>
            <person name="Galperin M.Y."/>
            <person name="Koonin E.V."/>
            <person name="Makarova K.S."/>
            <person name="Wolf Y.I."/>
            <person name="Rigden D.J."/>
            <person name="Dunfield P.F."/>
            <person name="Wang L."/>
            <person name="Alam M."/>
        </authorList>
    </citation>
    <scope>NUCLEOTIDE SEQUENCE [LARGE SCALE GENOMIC DNA]</scope>
    <source>
        <strain>DSM 21510 / WK1</strain>
    </source>
</reference>
<sequence>MKDPRDIIKRPVITERSTELMTEKKYTFEVDVKANKTEVKDAIEAIFGVKVAKVNIMNYKGKFKRVGRYSGLTNRRRKAIVTLTPDSKEIELFEV</sequence>